<protein>
    <recommendedName>
        <fullName evidence="2">Cytosolic Fe-S cluster assembly factor Nubp2 homolog</fullName>
    </recommendedName>
</protein>
<name>NUBP2_DROSI</name>
<sequence>MLDKVKNVIVVLSGKGGVGKSTVSTQLSLALRKNGFKVGLLDIDLCGPSVPYLLGLEGRDIFQCDEGWVPVYTDEFQTLAVMSIGFLLKNREDPVIWRGPKKTMMIRQFLTDVRWDELDYLIIDTPPGTSDEHITVMECLKEVGCHGAIIVTTPQEVALDDVRKEITFCKKTGINILGIVENMSGFVCPHCTSCTNIFSSNGGVSLATYAQVPHLGTLPIDPRVGVLAGTTTSVLDELPDSTTAEVLTHLVEKLKTMLAS</sequence>
<organism>
    <name type="scientific">Drosophila simulans</name>
    <name type="common">Fruit fly</name>
    <dbReference type="NCBI Taxonomy" id="7240"/>
    <lineage>
        <taxon>Eukaryota</taxon>
        <taxon>Metazoa</taxon>
        <taxon>Ecdysozoa</taxon>
        <taxon>Arthropoda</taxon>
        <taxon>Hexapoda</taxon>
        <taxon>Insecta</taxon>
        <taxon>Pterygota</taxon>
        <taxon>Neoptera</taxon>
        <taxon>Endopterygota</taxon>
        <taxon>Diptera</taxon>
        <taxon>Brachycera</taxon>
        <taxon>Muscomorpha</taxon>
        <taxon>Ephydroidea</taxon>
        <taxon>Drosophilidae</taxon>
        <taxon>Drosophila</taxon>
        <taxon>Sophophora</taxon>
    </lineage>
</organism>
<evidence type="ECO:0000250" key="1">
    <source>
        <dbReference type="UniProtKB" id="Q9VPD2"/>
    </source>
</evidence>
<evidence type="ECO:0000255" key="2">
    <source>
        <dbReference type="HAMAP-Rule" id="MF_03039"/>
    </source>
</evidence>
<reference key="1">
    <citation type="journal article" date="2007" name="Nature">
        <title>Evolution of genes and genomes on the Drosophila phylogeny.</title>
        <authorList>
            <consortium name="Drosophila 12 genomes consortium"/>
        </authorList>
    </citation>
    <scope>NUCLEOTIDE SEQUENCE [LARGE SCALE GENOMIC DNA]</scope>
</reference>
<gene>
    <name evidence="1" type="primary">Nubp2</name>
    <name type="ORF">GD14899</name>
</gene>
<accession>B4QJ46</accession>
<keyword id="KW-0004">4Fe-4S</keyword>
<keyword id="KW-0067">ATP-binding</keyword>
<keyword id="KW-0963">Cytoplasm</keyword>
<keyword id="KW-0408">Iron</keyword>
<keyword id="KW-0411">Iron-sulfur</keyword>
<keyword id="KW-0479">Metal-binding</keyword>
<keyword id="KW-0547">Nucleotide-binding</keyword>
<keyword id="KW-1185">Reference proteome</keyword>
<comment type="function">
    <text evidence="2">Component of the cytosolic iron-sulfur (Fe/S) protein assembly (CIA) machinery. Required for maturation of extramitochondrial Fe-S proteins. The Nubp1-Nubp2 heterotetramer forms a Fe-S scaffold complex, mediating the de novo assembly of an Fe-S cluster and its transfer to target apoproteins.</text>
</comment>
<comment type="cofactor">
    <cofactor evidence="2">
        <name>[4Fe-4S] cluster</name>
        <dbReference type="ChEBI" id="CHEBI:49883"/>
    </cofactor>
    <text evidence="2">Binds 4 [4Fe-4S] clusters per heterotetramer. Contains two stable clusters in the N-termini of Nubp1 and two labile, bridging clusters between subunits of the Nubp1-Nubp2 heterotetramer.</text>
</comment>
<comment type="subunit">
    <text evidence="2">Heterotetramer of 2 Nubp1 and 2 Nubp2 chains.</text>
</comment>
<comment type="subcellular location">
    <subcellularLocation>
        <location evidence="2">Cytoplasm</location>
    </subcellularLocation>
</comment>
<comment type="similarity">
    <text evidence="2">Belongs to the Mrp/NBP35 ATP-binding proteins family. NUBP2/CFD1 subfamily.</text>
</comment>
<proteinExistence type="inferred from homology"/>
<feature type="chain" id="PRO_0000382716" description="Cytosolic Fe-S cluster assembly factor Nubp2 homolog">
    <location>
        <begin position="1"/>
        <end position="260"/>
    </location>
</feature>
<feature type="binding site" evidence="2">
    <location>
        <begin position="14"/>
        <end position="21"/>
    </location>
    <ligand>
        <name>ATP</name>
        <dbReference type="ChEBI" id="CHEBI:30616"/>
    </ligand>
</feature>
<feature type="binding site" evidence="2">
    <location>
        <position position="188"/>
    </location>
    <ligand>
        <name>[4Fe-4S] cluster</name>
        <dbReference type="ChEBI" id="CHEBI:49883"/>
        <note>ligand shared between dimeric partners</note>
    </ligand>
</feature>
<feature type="binding site" evidence="2">
    <location>
        <position position="191"/>
    </location>
    <ligand>
        <name>[4Fe-4S] cluster</name>
        <dbReference type="ChEBI" id="CHEBI:49883"/>
        <note>ligand shared between dimeric partners</note>
    </ligand>
</feature>
<dbReference type="EMBL" id="CM000363">
    <property type="protein sequence ID" value="EDX11263.1"/>
    <property type="molecule type" value="Genomic_DNA"/>
</dbReference>
<dbReference type="SMR" id="B4QJ46"/>
<dbReference type="STRING" id="7240.B4QJ46"/>
<dbReference type="EnsemblMetazoa" id="FBtr0214809">
    <property type="protein sequence ID" value="FBpp0213301"/>
    <property type="gene ID" value="FBgn0186571"/>
</dbReference>
<dbReference type="EnsemblMetazoa" id="XM_002085642.3">
    <property type="protein sequence ID" value="XP_002085678.1"/>
    <property type="gene ID" value="LOC6738883"/>
</dbReference>
<dbReference type="GeneID" id="6738883"/>
<dbReference type="CTD" id="10101"/>
<dbReference type="HOGENOM" id="CLU_024839_0_1_1"/>
<dbReference type="OMA" id="WIPVFAD"/>
<dbReference type="OrthoDB" id="1741334at2759"/>
<dbReference type="PhylomeDB" id="B4QJ46"/>
<dbReference type="Proteomes" id="UP000000304">
    <property type="component" value="Chromosome 3L"/>
</dbReference>
<dbReference type="Bgee" id="FBgn0186571">
    <property type="expression patterns" value="Expressed in embryo and 3 other cell types or tissues"/>
</dbReference>
<dbReference type="GO" id="GO:0005829">
    <property type="term" value="C:cytosol"/>
    <property type="evidence" value="ECO:0007669"/>
    <property type="project" value="TreeGrafter"/>
</dbReference>
<dbReference type="GO" id="GO:0051539">
    <property type="term" value="F:4 iron, 4 sulfur cluster binding"/>
    <property type="evidence" value="ECO:0007669"/>
    <property type="project" value="UniProtKB-UniRule"/>
</dbReference>
<dbReference type="GO" id="GO:0005524">
    <property type="term" value="F:ATP binding"/>
    <property type="evidence" value="ECO:0007669"/>
    <property type="project" value="UniProtKB-KW"/>
</dbReference>
<dbReference type="GO" id="GO:0140663">
    <property type="term" value="F:ATP-dependent FeS chaperone activity"/>
    <property type="evidence" value="ECO:0007669"/>
    <property type="project" value="InterPro"/>
</dbReference>
<dbReference type="GO" id="GO:0046872">
    <property type="term" value="F:metal ion binding"/>
    <property type="evidence" value="ECO:0007669"/>
    <property type="project" value="UniProtKB-KW"/>
</dbReference>
<dbReference type="GO" id="GO:0016226">
    <property type="term" value="P:iron-sulfur cluster assembly"/>
    <property type="evidence" value="ECO:0007669"/>
    <property type="project" value="UniProtKB-UniRule"/>
</dbReference>
<dbReference type="CDD" id="cd02037">
    <property type="entry name" value="Mrp_NBP35"/>
    <property type="match status" value="1"/>
</dbReference>
<dbReference type="FunFam" id="3.40.50.300:FF:000796">
    <property type="entry name" value="Cytosolic Fe-S cluster assembly factor NUBP2"/>
    <property type="match status" value="1"/>
</dbReference>
<dbReference type="Gene3D" id="3.40.50.300">
    <property type="entry name" value="P-loop containing nucleotide triphosphate hydrolases"/>
    <property type="match status" value="1"/>
</dbReference>
<dbReference type="HAMAP" id="MF_02040">
    <property type="entry name" value="Mrp_NBP35"/>
    <property type="match status" value="1"/>
</dbReference>
<dbReference type="HAMAP" id="MF_03039">
    <property type="entry name" value="NUBP2"/>
    <property type="match status" value="1"/>
</dbReference>
<dbReference type="InterPro" id="IPR000808">
    <property type="entry name" value="Mrp-like_CS"/>
</dbReference>
<dbReference type="InterPro" id="IPR019591">
    <property type="entry name" value="Mrp/NBP35_ATP-bd"/>
</dbReference>
<dbReference type="InterPro" id="IPR028600">
    <property type="entry name" value="NUBP2/Cfd1_eukaryotes"/>
</dbReference>
<dbReference type="InterPro" id="IPR027417">
    <property type="entry name" value="P-loop_NTPase"/>
</dbReference>
<dbReference type="InterPro" id="IPR033756">
    <property type="entry name" value="YlxH/NBP35"/>
</dbReference>
<dbReference type="PANTHER" id="PTHR23264:SF19">
    <property type="entry name" value="CYTOSOLIC FE-S CLUSTER ASSEMBLY FACTOR NUBP2"/>
    <property type="match status" value="1"/>
</dbReference>
<dbReference type="PANTHER" id="PTHR23264">
    <property type="entry name" value="NUCLEOTIDE-BINDING PROTEIN NBP35 YEAST -RELATED"/>
    <property type="match status" value="1"/>
</dbReference>
<dbReference type="Pfam" id="PF10609">
    <property type="entry name" value="ParA"/>
    <property type="match status" value="1"/>
</dbReference>
<dbReference type="SUPFAM" id="SSF52540">
    <property type="entry name" value="P-loop containing nucleoside triphosphate hydrolases"/>
    <property type="match status" value="1"/>
</dbReference>
<dbReference type="PROSITE" id="PS01215">
    <property type="entry name" value="MRP"/>
    <property type="match status" value="1"/>
</dbReference>